<name>PHF3_HUMAN</name>
<keyword id="KW-0002">3D-structure</keyword>
<keyword id="KW-0025">Alternative splicing</keyword>
<keyword id="KW-1017">Isopeptide bond</keyword>
<keyword id="KW-0479">Metal-binding</keyword>
<keyword id="KW-0488">Methylation</keyword>
<keyword id="KW-0597">Phosphoprotein</keyword>
<keyword id="KW-1267">Proteomics identification</keyword>
<keyword id="KW-1185">Reference proteome</keyword>
<keyword id="KW-0832">Ubl conjugation</keyword>
<keyword id="KW-0862">Zinc</keyword>
<keyword id="KW-0863">Zinc-finger</keyword>
<feature type="chain" id="PRO_0000059292" description="PHD finger protein 3">
    <location>
        <begin position="1"/>
        <end position="2039"/>
    </location>
</feature>
<feature type="domain" description="TFIIS central" evidence="2">
    <location>
        <begin position="927"/>
        <end position="1046"/>
    </location>
</feature>
<feature type="zinc finger region" description="PHD-type" evidence="1">
    <location>
        <begin position="717"/>
        <end position="772"/>
    </location>
</feature>
<feature type="region of interest" description="Disordered" evidence="3">
    <location>
        <begin position="144"/>
        <end position="178"/>
    </location>
</feature>
<feature type="region of interest" description="Disordered" evidence="3">
    <location>
        <begin position="460"/>
        <end position="492"/>
    </location>
</feature>
<feature type="region of interest" description="Disordered" evidence="3">
    <location>
        <begin position="528"/>
        <end position="555"/>
    </location>
</feature>
<feature type="region of interest" description="Disordered" evidence="3">
    <location>
        <begin position="596"/>
        <end position="685"/>
    </location>
</feature>
<feature type="region of interest" description="Disordered" evidence="3">
    <location>
        <begin position="860"/>
        <end position="904"/>
    </location>
</feature>
<feature type="region of interest" description="Disordered" evidence="3">
    <location>
        <begin position="1078"/>
        <end position="1109"/>
    </location>
</feature>
<feature type="region of interest" description="Disordered" evidence="3">
    <location>
        <begin position="1171"/>
        <end position="1191"/>
    </location>
</feature>
<feature type="region of interest" description="Disordered" evidence="3">
    <location>
        <begin position="1360"/>
        <end position="1380"/>
    </location>
</feature>
<feature type="region of interest" description="Disordered" evidence="3">
    <location>
        <begin position="1581"/>
        <end position="1623"/>
    </location>
</feature>
<feature type="region of interest" description="Disordered" evidence="3">
    <location>
        <begin position="1643"/>
        <end position="1684"/>
    </location>
</feature>
<feature type="region of interest" description="Disordered" evidence="3">
    <location>
        <begin position="1776"/>
        <end position="1800"/>
    </location>
</feature>
<feature type="region of interest" description="Disordered" evidence="3">
    <location>
        <begin position="1884"/>
        <end position="2039"/>
    </location>
</feature>
<feature type="compositionally biased region" description="Polar residues" evidence="3">
    <location>
        <begin position="144"/>
        <end position="168"/>
    </location>
</feature>
<feature type="compositionally biased region" description="Basic and acidic residues" evidence="3">
    <location>
        <begin position="460"/>
        <end position="472"/>
    </location>
</feature>
<feature type="compositionally biased region" description="Low complexity" evidence="3">
    <location>
        <begin position="473"/>
        <end position="483"/>
    </location>
</feature>
<feature type="compositionally biased region" description="Basic and acidic residues" evidence="3">
    <location>
        <begin position="596"/>
        <end position="612"/>
    </location>
</feature>
<feature type="compositionally biased region" description="Polar residues" evidence="3">
    <location>
        <begin position="617"/>
        <end position="640"/>
    </location>
</feature>
<feature type="compositionally biased region" description="Basic and acidic residues" evidence="3">
    <location>
        <begin position="642"/>
        <end position="670"/>
    </location>
</feature>
<feature type="compositionally biased region" description="Basic and acidic residues" evidence="3">
    <location>
        <begin position="867"/>
        <end position="878"/>
    </location>
</feature>
<feature type="compositionally biased region" description="Basic and acidic residues" evidence="3">
    <location>
        <begin position="889"/>
        <end position="900"/>
    </location>
</feature>
<feature type="compositionally biased region" description="Basic and acidic residues" evidence="3">
    <location>
        <begin position="1084"/>
        <end position="1102"/>
    </location>
</feature>
<feature type="compositionally biased region" description="Basic and acidic residues" evidence="3">
    <location>
        <begin position="1581"/>
        <end position="1598"/>
    </location>
</feature>
<feature type="compositionally biased region" description="Basic and acidic residues" evidence="3">
    <location>
        <begin position="1666"/>
        <end position="1684"/>
    </location>
</feature>
<feature type="compositionally biased region" description="Low complexity" evidence="3">
    <location>
        <begin position="1781"/>
        <end position="1797"/>
    </location>
</feature>
<feature type="compositionally biased region" description="Basic and acidic residues" evidence="3">
    <location>
        <begin position="1888"/>
        <end position="1902"/>
    </location>
</feature>
<feature type="compositionally biased region" description="Basic and acidic residues" evidence="3">
    <location>
        <begin position="1912"/>
        <end position="2039"/>
    </location>
</feature>
<feature type="modified residue" description="Phosphoserine" evidence="11">
    <location>
        <position position="97"/>
    </location>
</feature>
<feature type="modified residue" description="Phosphoserine" evidence="11">
    <location>
        <position position="125"/>
    </location>
</feature>
<feature type="modified residue" description="Phosphoserine" evidence="9 11">
    <location>
        <position position="283"/>
    </location>
</feature>
<feature type="modified residue" description="Phosphoserine" evidence="9">
    <location>
        <position position="299"/>
    </location>
</feature>
<feature type="modified residue" description="Phosphoserine" evidence="9">
    <location>
        <position position="680"/>
    </location>
</feature>
<feature type="modified residue" description="Phosphoserine" evidence="11">
    <location>
        <position position="1014"/>
    </location>
</feature>
<feature type="modified residue" description="Phosphoserine" evidence="9 10 11 13">
    <location>
        <position position="1133"/>
    </location>
</feature>
<feature type="modified residue" description="Phosphoserine" evidence="7 13">
    <location>
        <position position="1148"/>
    </location>
</feature>
<feature type="modified residue" description="Phosphoserine" evidence="8 9 13">
    <location>
        <position position="1178"/>
    </location>
</feature>
<feature type="modified residue" description="Phosphoserine" evidence="11">
    <location>
        <position position="1614"/>
    </location>
</feature>
<feature type="modified residue" description="Phosphoserine" evidence="9 11">
    <location>
        <position position="1642"/>
    </location>
</feature>
<feature type="modified residue" description="Asymmetric dimethylarginine" evidence="12">
    <location>
        <position position="1867"/>
    </location>
</feature>
<feature type="modified residue" description="Asymmetric dimethylarginine" evidence="12">
    <location>
        <position position="1877"/>
    </location>
</feature>
<feature type="modified residue" description="Phosphoserine" evidence="13">
    <location>
        <position position="1898"/>
    </location>
</feature>
<feature type="modified residue" description="Phosphoserine" evidence="11">
    <location>
        <position position="1925"/>
    </location>
</feature>
<feature type="cross-link" description="Glycyl lysine isopeptide (Lys-Gly) (interchain with G-Cter in SUMO2)" evidence="14">
    <location>
        <position position="644"/>
    </location>
</feature>
<feature type="cross-link" description="Glycyl lysine isopeptide (Lys-Gly) (interchain with G-Cter in SUMO2)" evidence="14">
    <location>
        <position position="964"/>
    </location>
</feature>
<feature type="cross-link" description="Glycyl lysine isopeptide (Lys-Gly) (interchain with G-Cter in SUMO2)" evidence="14">
    <location>
        <position position="1931"/>
    </location>
</feature>
<feature type="splice variant" id="VSP_026434" description="In isoform 2." evidence="5">
    <location>
        <begin position="1"/>
        <end position="88"/>
    </location>
</feature>
<feature type="sequence variant" id="VAR_051599" description="In dbSNP:rs34288820.">
    <original>V</original>
    <variation>I</variation>
    <location>
        <position position="525"/>
    </location>
</feature>
<feature type="sequence variant" id="VAR_022040" description="In dbSNP:rs3734881.">
    <original>H</original>
    <variation>Y</variation>
    <location>
        <position position="1834"/>
    </location>
</feature>
<feature type="sequence conflict" description="In Ref. 4; CAI56715." evidence="6" ref="4">
    <original>E</original>
    <variation>G</variation>
    <location>
        <position position="1394"/>
    </location>
</feature>
<feature type="helix" evidence="15">
    <location>
        <begin position="924"/>
        <end position="943"/>
    </location>
</feature>
<feature type="turn" evidence="15">
    <location>
        <begin position="944"/>
        <end position="947"/>
    </location>
</feature>
<feature type="helix" evidence="15">
    <location>
        <begin position="952"/>
        <end position="970"/>
    </location>
</feature>
<feature type="helix" evidence="15">
    <location>
        <begin position="975"/>
        <end position="984"/>
    </location>
</feature>
<feature type="helix" evidence="15">
    <location>
        <begin position="986"/>
        <end position="989"/>
    </location>
</feature>
<feature type="strand" evidence="15">
    <location>
        <begin position="990"/>
        <end position="992"/>
    </location>
</feature>
<feature type="helix" evidence="15">
    <location>
        <begin position="996"/>
        <end position="1002"/>
    </location>
</feature>
<feature type="strand" evidence="15">
    <location>
        <begin position="1003"/>
        <end position="1005"/>
    </location>
</feature>
<feature type="helix" evidence="15">
    <location>
        <begin position="1009"/>
        <end position="1012"/>
    </location>
</feature>
<feature type="turn" evidence="15">
    <location>
        <begin position="1015"/>
        <end position="1020"/>
    </location>
</feature>
<feature type="turn" evidence="15">
    <location>
        <begin position="1024"/>
        <end position="1026"/>
    </location>
</feature>
<feature type="strand" evidence="16">
    <location>
        <begin position="1208"/>
        <end position="1215"/>
    </location>
</feature>
<feature type="turn" evidence="16">
    <location>
        <begin position="1216"/>
        <end position="1218"/>
    </location>
</feature>
<feature type="strand" evidence="16">
    <location>
        <begin position="1219"/>
        <end position="1230"/>
    </location>
</feature>
<feature type="helix" evidence="16">
    <location>
        <begin position="1235"/>
        <end position="1238"/>
    </location>
</feature>
<feature type="strand" evidence="16">
    <location>
        <begin position="1241"/>
        <end position="1249"/>
    </location>
</feature>
<feature type="helix" evidence="16">
    <location>
        <begin position="1251"/>
        <end position="1264"/>
    </location>
</feature>
<feature type="strand" evidence="16">
    <location>
        <begin position="1267"/>
        <end position="1278"/>
    </location>
</feature>
<feature type="helix" evidence="16">
    <location>
        <begin position="1279"/>
        <end position="1295"/>
    </location>
</feature>
<feature type="strand" evidence="16">
    <location>
        <begin position="1298"/>
        <end position="1303"/>
    </location>
</feature>
<feature type="strand" evidence="16">
    <location>
        <begin position="1308"/>
        <end position="1316"/>
    </location>
</feature>
<feature type="strand" evidence="17">
    <location>
        <begin position="1318"/>
        <end position="1320"/>
    </location>
</feature>
<feature type="helix" evidence="16">
    <location>
        <begin position="1324"/>
        <end position="1326"/>
    </location>
</feature>
<feature type="strand" evidence="16">
    <location>
        <begin position="1330"/>
        <end position="1332"/>
    </location>
</feature>
<feature type="strand" evidence="16">
    <location>
        <begin position="1341"/>
        <end position="1349"/>
    </location>
</feature>
<sequence length="2039" mass="229481">MDIVDTFNHLIPTEHLDDALFLGSNLENEVCEDFSASQNVLEDSLKNMLSDKDPMLGSASNQFCLPVLDSNDPNFQMPCSTVVGLDDIMDEGVVKESGNDTIDEEELILPNRNLRDKVEENSVRSPRKSPRLMAQEQVRSLRQSTIAKRSNAAPLSNTKKASGKTVSTAKAGVKQPERSQVKEEVCMSLKPEYHKENRRCSRNSGQIEVVPEVSVSSSHSSVSSCLEMKDEDGLDSKHKCNNPGEIDVPSHELNCSLLSETCVTIGEKKNEALMECKAKPVGSPLFKFSDKEEHEQNDSISGKTGETVVEEMIATRKVEQDSKETVKLSHEDDHILEDAGSSDISSDAACTNPNKTENSLVGLPSCVDEVTECNLELKDTMGIADKTENTLERNKIEPLGYCEDAESNRQLESTEFNKSNLEVVDTSTFGPESNILENAICDVPDQNSKQLNAIESTKIESHETANLQDDRNSQSSSVSYLESKSVKSKHTKPVIHSKQNMTTDAPKKIVAAKYEVIHSKTKVNVKSVKRNTDVPESQQNFHRPVKVRKKQIDKEPKIQSCNSGVKSVKNQAHSVLKKTLQDQTLVQIFKPLTHSLSDKSHAHPGCLKEPHHPAQTGHVSHSSQKQCHKPQQQAPAMKTNSHVKEELEHPGVEHFKEEDKLKLKKPEKNLQPRQRRSSKSFSLDEPPLFIPDNIATIRREGSDHSSSFESKYMWTPSKQCGFCKKPHGNRFMVGCGRCDDWFHGDCVGLSLSQAQQMGEEDKEYVCVKCCAEEDKKTEILDPDTLENQATVEFHSGDKTMECEKLGLSKHTTNDRTKYIDDTVKHKVKILKRESGEGRNSSDCRDNEIKKWQLAPLRKMGQPVLPRRSSEEKSEKIPKESTTVTCTGEKASKPGTHEKQEMKKKKVEKGVLNVHPAASASKPSADQIRQSVRHSLKDILMKRLTDSNLKVPEEKAAKVATKIEKELFSFFRDTDAKYKNKYRSLMFNLKDPKNNILFKKVLKGEVTPDHLIRMSPEELASKELAAWRRRENRHTIEMIEKEQREVERRPITKITHKGEIEIESDAPMKEQEAAMEIQEPAANKSLEKPEGSEKQKEEVDSMSKDTTSQHRQHLFDLNCKICIGRMAPPVDDLSPKKVKVVVGVARKHSDNEAESIADALSSTSNILASEFFEEEKQESPKSTFSPAPRPEMPGTVEVESTFLARLNFIWKGFINMPSVAKFVTKAYPVSGSPEYLTEDLPDSIQVGGRISPQTVWDYVEKIKASGTKEICVVRFTPVTEEDQISYTLLFAYFSSRKRYGVAANNMKQVKDMYLIPLGATDKIPHPLVPFDGPGLELHRPNLLLGLIIRQKLKRQHSACASTSHIAETPESAPPIALPPDKKSKIEVSTEEAPEEENDFFNSFTTVLHKQRNKPQQNLQEDLPTAVEPLMEVTKQEPPKPLRFLPGVLIGWENQPTTLELANKPLPVDDILQSLLGTTGQVYDQAQSVMEQNTVKEIPFLNEQTNSKIEKTDNVEVTDGENKEIKVKVDNISESTDKSAEIETSVVGSSSISAGSLTSLSLRGKPPDVSTEAFLTNLSIQSKQEETVESKEKTLKRQLQEDQENNLQDNQTSNSSPCRSNVGKGNIDGNVSCSENLVANTARSPQFINLKRDPRQAAGRSQPVTTSESKDGDSCRNGEKHMLPGLSHNKEHLTEQINVEEKLCSAEKNSCVQQSDNLKVAQNSPSVENIQTSQAEQAKPLQEDILMQNIETVHPFRRGSAVATSHFEVGNTCPSEFPSKSITFTSRSTSPRTSTNFSPMRPQQPNLQHLKSSPPGFPFPGPPNFPPQSMFGFPPHLPPPLLPPPGFGFAQNPMVPWPPVVHLPGQPQRMMGPLSQASRYIGPQNFYQVKDIRRPERRHSDPWGRQDQQQLDRPFNRGKGDRQRFYSDSHHLKRERHEKEWEQESERHRRRDRSQDKDRDRKSREEGHKDKERARLSHGDRGTDGKASRDSRNVDKKPDKPKSEDYEKDKEREKSKHREGEKDRDRYHKDRDHTDRTKSKR</sequence>
<proteinExistence type="evidence at protein level"/>
<gene>
    <name type="primary">PHF3</name>
    <name type="synonym">KIAA0244</name>
</gene>
<dbReference type="EMBL" id="AF091622">
    <property type="protein sequence ID" value="AAF21292.1"/>
    <property type="molecule type" value="mRNA"/>
</dbReference>
<dbReference type="EMBL" id="D87685">
    <property type="protein sequence ID" value="BAA13438.2"/>
    <property type="status" value="ALT_INIT"/>
    <property type="molecule type" value="mRNA"/>
</dbReference>
<dbReference type="EMBL" id="BX648268">
    <property type="protein sequence ID" value="CAI56715.1"/>
    <property type="molecule type" value="mRNA"/>
</dbReference>
<dbReference type="EMBL" id="AL050329">
    <property type="protein sequence ID" value="CAM45842.1"/>
    <property type="molecule type" value="Genomic_DNA"/>
</dbReference>
<dbReference type="EMBL" id="AL354719">
    <property type="protein sequence ID" value="CAM45842.1"/>
    <property type="status" value="JOINED"/>
    <property type="molecule type" value="Genomic_DNA"/>
</dbReference>
<dbReference type="EMBL" id="BC113650">
    <property type="protein sequence ID" value="AAI13651.1"/>
    <property type="molecule type" value="mRNA"/>
</dbReference>
<dbReference type="EMBL" id="BC113652">
    <property type="protein sequence ID" value="AAI13653.1"/>
    <property type="molecule type" value="mRNA"/>
</dbReference>
<dbReference type="CCDS" id="CCDS4966.1">
    <molecule id="Q92576-1"/>
</dbReference>
<dbReference type="RefSeq" id="NP_001277188.1">
    <molecule id="Q92576-2"/>
    <property type="nucleotide sequence ID" value="NM_001290259.2"/>
</dbReference>
<dbReference type="RefSeq" id="NP_001277189.1">
    <property type="nucleotide sequence ID" value="NM_001290260.1"/>
</dbReference>
<dbReference type="RefSeq" id="NP_001357277.1">
    <molecule id="Q92576-1"/>
    <property type="nucleotide sequence ID" value="NM_001370348.2"/>
</dbReference>
<dbReference type="RefSeq" id="NP_001357278.1">
    <molecule id="Q92576-2"/>
    <property type="nucleotide sequence ID" value="NM_001370349.2"/>
</dbReference>
<dbReference type="RefSeq" id="NP_055968.1">
    <molecule id="Q92576-1"/>
    <property type="nucleotide sequence ID" value="NM_015153.4"/>
</dbReference>
<dbReference type="RefSeq" id="XP_005248758.1">
    <property type="nucleotide sequence ID" value="XM_005248701.3"/>
</dbReference>
<dbReference type="RefSeq" id="XP_005248759.1">
    <property type="nucleotide sequence ID" value="XM_005248702.3"/>
</dbReference>
<dbReference type="RefSeq" id="XP_006715489.1">
    <property type="nucleotide sequence ID" value="XM_006715426.3"/>
</dbReference>
<dbReference type="RefSeq" id="XP_047274484.1">
    <molecule id="Q92576-2"/>
    <property type="nucleotide sequence ID" value="XM_047418528.1"/>
</dbReference>
<dbReference type="RefSeq" id="XP_047274485.1">
    <molecule id="Q92576-2"/>
    <property type="nucleotide sequence ID" value="XM_047418529.1"/>
</dbReference>
<dbReference type="RefSeq" id="XP_047274486.1">
    <molecule id="Q92576-2"/>
    <property type="nucleotide sequence ID" value="XM_047418530.1"/>
</dbReference>
<dbReference type="PDB" id="2DME">
    <property type="method" value="NMR"/>
    <property type="chains" value="A=923-1029"/>
</dbReference>
<dbReference type="PDB" id="6IC8">
    <property type="method" value="X-ray"/>
    <property type="resolution" value="1.93 A"/>
    <property type="chains" value="A/B=1199-1356"/>
</dbReference>
<dbReference type="PDB" id="6IC9">
    <property type="method" value="X-ray"/>
    <property type="resolution" value="1.75 A"/>
    <property type="chains" value="A/B=1199-1356"/>
</dbReference>
<dbReference type="PDB" id="6Q2V">
    <property type="method" value="X-ray"/>
    <property type="resolution" value="2.59 A"/>
    <property type="chains" value="A/B/C/D/E/F/G/H=1199-1356"/>
</dbReference>
<dbReference type="PDB" id="6Q5Y">
    <property type="method" value="X-ray"/>
    <property type="resolution" value="2.85 A"/>
    <property type="chains" value="A/B/C/D=1199-1356"/>
</dbReference>
<dbReference type="PDBsum" id="2DME"/>
<dbReference type="PDBsum" id="6IC8"/>
<dbReference type="PDBsum" id="6IC9"/>
<dbReference type="PDBsum" id="6Q2V"/>
<dbReference type="PDBsum" id="6Q5Y"/>
<dbReference type="SMR" id="Q92576"/>
<dbReference type="BioGRID" id="117031">
    <property type="interactions" value="121"/>
</dbReference>
<dbReference type="FunCoup" id="Q92576">
    <property type="interactions" value="2029"/>
</dbReference>
<dbReference type="IntAct" id="Q92576">
    <property type="interactions" value="74"/>
</dbReference>
<dbReference type="MINT" id="Q92576"/>
<dbReference type="STRING" id="9606.ENSP00000262043"/>
<dbReference type="GlyCosmos" id="Q92576">
    <property type="glycosylation" value="1 site, 1 glycan"/>
</dbReference>
<dbReference type="GlyGen" id="Q92576">
    <property type="glycosylation" value="17 sites, 1 O-linked glycan (17 sites)"/>
</dbReference>
<dbReference type="iPTMnet" id="Q92576"/>
<dbReference type="MetOSite" id="Q92576"/>
<dbReference type="PhosphoSitePlus" id="Q92576"/>
<dbReference type="SwissPalm" id="Q92576"/>
<dbReference type="BioMuta" id="PHF3"/>
<dbReference type="DMDM" id="34098662"/>
<dbReference type="jPOST" id="Q92576"/>
<dbReference type="MassIVE" id="Q92576"/>
<dbReference type="PaxDb" id="9606-ENSP00000262043"/>
<dbReference type="PeptideAtlas" id="Q92576"/>
<dbReference type="ProteomicsDB" id="75337">
    <molecule id="Q92576-1"/>
</dbReference>
<dbReference type="ProteomicsDB" id="75338">
    <molecule id="Q92576-2"/>
</dbReference>
<dbReference type="Pumba" id="Q92576"/>
<dbReference type="Antibodypedia" id="31168">
    <property type="antibodies" value="79 antibodies from 22 providers"/>
</dbReference>
<dbReference type="DNASU" id="23469"/>
<dbReference type="Ensembl" id="ENST00000262043.8">
    <molecule id="Q92576-1"/>
    <property type="protein sequence ID" value="ENSP00000262043.4"/>
    <property type="gene ID" value="ENSG00000118482.12"/>
</dbReference>
<dbReference type="Ensembl" id="ENST00000393387.5">
    <molecule id="Q92576-1"/>
    <property type="protein sequence ID" value="ENSP00000377048.1"/>
    <property type="gene ID" value="ENSG00000118482.12"/>
</dbReference>
<dbReference type="GeneID" id="23469"/>
<dbReference type="KEGG" id="hsa:23469"/>
<dbReference type="MANE-Select" id="ENST00000262043.8">
    <property type="protein sequence ID" value="ENSP00000262043.4"/>
    <property type="RefSeq nucleotide sequence ID" value="NM_001370348.2"/>
    <property type="RefSeq protein sequence ID" value="NP_001357277.1"/>
</dbReference>
<dbReference type="UCSC" id="uc003pep.2">
    <molecule id="Q92576-1"/>
    <property type="organism name" value="human"/>
</dbReference>
<dbReference type="AGR" id="HGNC:8921"/>
<dbReference type="CTD" id="23469"/>
<dbReference type="DisGeNET" id="23469"/>
<dbReference type="GeneCards" id="PHF3"/>
<dbReference type="HGNC" id="HGNC:8921">
    <property type="gene designation" value="PHF3"/>
</dbReference>
<dbReference type="HPA" id="ENSG00000118482">
    <property type="expression patterns" value="Low tissue specificity"/>
</dbReference>
<dbReference type="MalaCards" id="PHF3"/>
<dbReference type="MIM" id="607789">
    <property type="type" value="gene"/>
</dbReference>
<dbReference type="neXtProt" id="NX_Q92576"/>
<dbReference type="OpenTargets" id="ENSG00000118482"/>
<dbReference type="PharmGKB" id="PA33261"/>
<dbReference type="VEuPathDB" id="HostDB:ENSG00000118482"/>
<dbReference type="eggNOG" id="KOG1634">
    <property type="taxonomic scope" value="Eukaryota"/>
</dbReference>
<dbReference type="GeneTree" id="ENSGT00940000155080"/>
<dbReference type="HOGENOM" id="CLU_001663_0_0_1"/>
<dbReference type="InParanoid" id="Q92576"/>
<dbReference type="OMA" id="RQPERCQ"/>
<dbReference type="OrthoDB" id="1884872at2759"/>
<dbReference type="PAN-GO" id="Q92576">
    <property type="GO annotations" value="2 GO annotations based on evolutionary models"/>
</dbReference>
<dbReference type="PhylomeDB" id="Q92576"/>
<dbReference type="TreeFam" id="TF350578"/>
<dbReference type="PathwayCommons" id="Q92576"/>
<dbReference type="SignaLink" id="Q92576"/>
<dbReference type="SIGNOR" id="Q92576"/>
<dbReference type="BioGRID-ORCS" id="23469">
    <property type="hits" value="16 hits in 1167 CRISPR screens"/>
</dbReference>
<dbReference type="ChiTaRS" id="PHF3">
    <property type="organism name" value="human"/>
</dbReference>
<dbReference type="EvolutionaryTrace" id="Q92576"/>
<dbReference type="GeneWiki" id="PHF3"/>
<dbReference type="GenomeRNAi" id="23469"/>
<dbReference type="Pharos" id="Q92576">
    <property type="development level" value="Tbio"/>
</dbReference>
<dbReference type="PRO" id="PR:Q92576"/>
<dbReference type="Proteomes" id="UP000005640">
    <property type="component" value="Chromosome 6"/>
</dbReference>
<dbReference type="RNAct" id="Q92576">
    <property type="molecule type" value="protein"/>
</dbReference>
<dbReference type="Bgee" id="ENSG00000118482">
    <property type="expression patterns" value="Expressed in tendon of biceps brachii and 216 other cell types or tissues"/>
</dbReference>
<dbReference type="ExpressionAtlas" id="Q92576">
    <property type="expression patterns" value="baseline and differential"/>
</dbReference>
<dbReference type="GO" id="GO:0005634">
    <property type="term" value="C:nucleus"/>
    <property type="evidence" value="ECO:0000318"/>
    <property type="project" value="GO_Central"/>
</dbReference>
<dbReference type="GO" id="GO:0008270">
    <property type="term" value="F:zinc ion binding"/>
    <property type="evidence" value="ECO:0007669"/>
    <property type="project" value="UniProtKB-KW"/>
</dbReference>
<dbReference type="GO" id="GO:0006351">
    <property type="term" value="P:DNA-templated transcription"/>
    <property type="evidence" value="ECO:0007669"/>
    <property type="project" value="InterPro"/>
</dbReference>
<dbReference type="GO" id="GO:0006357">
    <property type="term" value="P:regulation of transcription by RNA polymerase II"/>
    <property type="evidence" value="ECO:0000318"/>
    <property type="project" value="GO_Central"/>
</dbReference>
<dbReference type="CDD" id="cd15638">
    <property type="entry name" value="PHD_PHF3"/>
    <property type="match status" value="1"/>
</dbReference>
<dbReference type="CDD" id="cd21548">
    <property type="entry name" value="SPOC_PHF3"/>
    <property type="match status" value="1"/>
</dbReference>
<dbReference type="Gene3D" id="1.10.472.30">
    <property type="entry name" value="Transcription elongation factor S-II, central domain"/>
    <property type="match status" value="1"/>
</dbReference>
<dbReference type="Gene3D" id="3.30.40.10">
    <property type="entry name" value="Zinc/RING finger domain, C3HC4 (zinc finger)"/>
    <property type="match status" value="1"/>
</dbReference>
<dbReference type="InterPro" id="IPR012921">
    <property type="entry name" value="SPOC_C"/>
</dbReference>
<dbReference type="InterPro" id="IPR003618">
    <property type="entry name" value="TFIIS_cen_dom"/>
</dbReference>
<dbReference type="InterPro" id="IPR036575">
    <property type="entry name" value="TFIIS_cen_dom_sf"/>
</dbReference>
<dbReference type="InterPro" id="IPR019786">
    <property type="entry name" value="Zinc_finger_PHD-type_CS"/>
</dbReference>
<dbReference type="InterPro" id="IPR011011">
    <property type="entry name" value="Znf_FYVE_PHD"/>
</dbReference>
<dbReference type="InterPro" id="IPR001965">
    <property type="entry name" value="Znf_PHD"/>
</dbReference>
<dbReference type="InterPro" id="IPR019787">
    <property type="entry name" value="Znf_PHD-finger"/>
</dbReference>
<dbReference type="InterPro" id="IPR013083">
    <property type="entry name" value="Znf_RING/FYVE/PHD"/>
</dbReference>
<dbReference type="PANTHER" id="PTHR11477:SF10">
    <property type="entry name" value="PHD FINGER PROTEIN 3"/>
    <property type="match status" value="1"/>
</dbReference>
<dbReference type="PANTHER" id="PTHR11477">
    <property type="entry name" value="TRANSCRIPTION FACTOR S-II ZINC FINGER DOMAIN-CONTAINING PROTEIN"/>
    <property type="match status" value="1"/>
</dbReference>
<dbReference type="Pfam" id="PF00628">
    <property type="entry name" value="PHD"/>
    <property type="match status" value="1"/>
</dbReference>
<dbReference type="Pfam" id="PF07744">
    <property type="entry name" value="SPOC"/>
    <property type="match status" value="1"/>
</dbReference>
<dbReference type="Pfam" id="PF07500">
    <property type="entry name" value="TFIIS_M"/>
    <property type="match status" value="1"/>
</dbReference>
<dbReference type="SMART" id="SM00249">
    <property type="entry name" value="PHD"/>
    <property type="match status" value="1"/>
</dbReference>
<dbReference type="SMART" id="SM00510">
    <property type="entry name" value="TFS2M"/>
    <property type="match status" value="1"/>
</dbReference>
<dbReference type="SUPFAM" id="SSF46942">
    <property type="entry name" value="Elongation factor TFIIS domain 2"/>
    <property type="match status" value="1"/>
</dbReference>
<dbReference type="SUPFAM" id="SSF57903">
    <property type="entry name" value="FYVE/PHD zinc finger"/>
    <property type="match status" value="1"/>
</dbReference>
<dbReference type="PROSITE" id="PS51321">
    <property type="entry name" value="TFIIS_CENTRAL"/>
    <property type="match status" value="1"/>
</dbReference>
<dbReference type="PROSITE" id="PS01359">
    <property type="entry name" value="ZF_PHD_1"/>
    <property type="match status" value="1"/>
</dbReference>
<dbReference type="PROSITE" id="PS50016">
    <property type="entry name" value="ZF_PHD_2"/>
    <property type="match status" value="1"/>
</dbReference>
<protein>
    <recommendedName>
        <fullName>PHD finger protein 3</fullName>
    </recommendedName>
</protein>
<organism>
    <name type="scientific">Homo sapiens</name>
    <name type="common">Human</name>
    <dbReference type="NCBI Taxonomy" id="9606"/>
    <lineage>
        <taxon>Eukaryota</taxon>
        <taxon>Metazoa</taxon>
        <taxon>Chordata</taxon>
        <taxon>Craniata</taxon>
        <taxon>Vertebrata</taxon>
        <taxon>Euteleostomi</taxon>
        <taxon>Mammalia</taxon>
        <taxon>Eutheria</taxon>
        <taxon>Euarchontoglires</taxon>
        <taxon>Primates</taxon>
        <taxon>Haplorrhini</taxon>
        <taxon>Catarrhini</taxon>
        <taxon>Hominidae</taxon>
        <taxon>Homo</taxon>
    </lineage>
</organism>
<evidence type="ECO:0000255" key="1">
    <source>
        <dbReference type="PROSITE-ProRule" id="PRU00146"/>
    </source>
</evidence>
<evidence type="ECO:0000255" key="2">
    <source>
        <dbReference type="PROSITE-ProRule" id="PRU00651"/>
    </source>
</evidence>
<evidence type="ECO:0000256" key="3">
    <source>
        <dbReference type="SAM" id="MobiDB-lite"/>
    </source>
</evidence>
<evidence type="ECO:0000269" key="4">
    <source>
    </source>
</evidence>
<evidence type="ECO:0000303" key="5">
    <source>
    </source>
</evidence>
<evidence type="ECO:0000305" key="6"/>
<evidence type="ECO:0007744" key="7">
    <source>
    </source>
</evidence>
<evidence type="ECO:0007744" key="8">
    <source>
    </source>
</evidence>
<evidence type="ECO:0007744" key="9">
    <source>
    </source>
</evidence>
<evidence type="ECO:0007744" key="10">
    <source>
    </source>
</evidence>
<evidence type="ECO:0007744" key="11">
    <source>
    </source>
</evidence>
<evidence type="ECO:0007744" key="12">
    <source>
    </source>
</evidence>
<evidence type="ECO:0007744" key="13">
    <source>
    </source>
</evidence>
<evidence type="ECO:0007744" key="14">
    <source>
    </source>
</evidence>
<evidence type="ECO:0007829" key="15">
    <source>
        <dbReference type="PDB" id="2DME"/>
    </source>
</evidence>
<evidence type="ECO:0007829" key="16">
    <source>
        <dbReference type="PDB" id="6IC9"/>
    </source>
</evidence>
<evidence type="ECO:0007829" key="17">
    <source>
        <dbReference type="PDB" id="6Q2V"/>
    </source>
</evidence>
<reference key="1">
    <citation type="journal article" date="2001" name="Cytogenet. Cell Genet.">
        <title>PHF3 expression is frequently reduced in glioma.</title>
        <authorList>
            <person name="Fischer U."/>
            <person name="Struss A.-K."/>
            <person name="Hemmer D."/>
            <person name="Michel A."/>
            <person name="Henn W."/>
            <person name="Steudel W.-I."/>
            <person name="Meese E."/>
        </authorList>
    </citation>
    <scope>NUCLEOTIDE SEQUENCE [MRNA] (ISOFORM 1)</scope>
    <scope>TISSUE SPECIFICITY</scope>
</reference>
<reference key="2">
    <citation type="journal article" date="1996" name="DNA Res.">
        <title>Prediction of the coding sequences of unidentified human genes. VI. The coding sequences of 80 new genes (KIAA0201-KIAA0280) deduced by analysis of cDNA clones from cell line KG-1 and brain.</title>
        <authorList>
            <person name="Nagase T."/>
            <person name="Seki N."/>
            <person name="Ishikawa K."/>
            <person name="Ohira M."/>
            <person name="Kawarabayasi Y."/>
            <person name="Ohara O."/>
            <person name="Tanaka A."/>
            <person name="Kotani H."/>
            <person name="Miyajima N."/>
            <person name="Nomura N."/>
        </authorList>
    </citation>
    <scope>NUCLEOTIDE SEQUENCE [LARGE SCALE MRNA] (ISOFORM 1)</scope>
    <source>
        <tissue>Bone marrow</tissue>
    </source>
</reference>
<reference key="3">
    <citation type="journal article" date="2002" name="DNA Res.">
        <title>Construction of expression-ready cDNA clones for KIAA genes: manual curation of 330 KIAA cDNA clones.</title>
        <authorList>
            <person name="Nakajima D."/>
            <person name="Okazaki N."/>
            <person name="Yamakawa H."/>
            <person name="Kikuno R."/>
            <person name="Ohara O."/>
            <person name="Nagase T."/>
        </authorList>
    </citation>
    <scope>SEQUENCE REVISION</scope>
</reference>
<reference key="4">
    <citation type="journal article" date="2007" name="BMC Genomics">
        <title>The full-ORF clone resource of the German cDNA consortium.</title>
        <authorList>
            <person name="Bechtel S."/>
            <person name="Rosenfelder H."/>
            <person name="Duda A."/>
            <person name="Schmidt C.P."/>
            <person name="Ernst U."/>
            <person name="Wellenreuther R."/>
            <person name="Mehrle A."/>
            <person name="Schuster C."/>
            <person name="Bahr A."/>
            <person name="Bloecker H."/>
            <person name="Heubner D."/>
            <person name="Hoerlein A."/>
            <person name="Michel G."/>
            <person name="Wedler H."/>
            <person name="Koehrer K."/>
            <person name="Ottenwaelder B."/>
            <person name="Poustka A."/>
            <person name="Wiemann S."/>
            <person name="Schupp I."/>
        </authorList>
    </citation>
    <scope>NUCLEOTIDE SEQUENCE [LARGE SCALE MRNA] (ISOFORM 2)</scope>
    <source>
        <tissue>Fetal kidney</tissue>
    </source>
</reference>
<reference key="5">
    <citation type="journal article" date="2003" name="Nature">
        <title>The DNA sequence and analysis of human chromosome 6.</title>
        <authorList>
            <person name="Mungall A.J."/>
            <person name="Palmer S.A."/>
            <person name="Sims S.K."/>
            <person name="Edwards C.A."/>
            <person name="Ashurst J.L."/>
            <person name="Wilming L."/>
            <person name="Jones M.C."/>
            <person name="Horton R."/>
            <person name="Hunt S.E."/>
            <person name="Scott C.E."/>
            <person name="Gilbert J.G.R."/>
            <person name="Clamp M.E."/>
            <person name="Bethel G."/>
            <person name="Milne S."/>
            <person name="Ainscough R."/>
            <person name="Almeida J.P."/>
            <person name="Ambrose K.D."/>
            <person name="Andrews T.D."/>
            <person name="Ashwell R.I.S."/>
            <person name="Babbage A.K."/>
            <person name="Bagguley C.L."/>
            <person name="Bailey J."/>
            <person name="Banerjee R."/>
            <person name="Barker D.J."/>
            <person name="Barlow K.F."/>
            <person name="Bates K."/>
            <person name="Beare D.M."/>
            <person name="Beasley H."/>
            <person name="Beasley O."/>
            <person name="Bird C.P."/>
            <person name="Blakey S.E."/>
            <person name="Bray-Allen S."/>
            <person name="Brook J."/>
            <person name="Brown A.J."/>
            <person name="Brown J.Y."/>
            <person name="Burford D.C."/>
            <person name="Burrill W."/>
            <person name="Burton J."/>
            <person name="Carder C."/>
            <person name="Carter N.P."/>
            <person name="Chapman J.C."/>
            <person name="Clark S.Y."/>
            <person name="Clark G."/>
            <person name="Clee C.M."/>
            <person name="Clegg S."/>
            <person name="Cobley V."/>
            <person name="Collier R.E."/>
            <person name="Collins J.E."/>
            <person name="Colman L.K."/>
            <person name="Corby N.R."/>
            <person name="Coville G.J."/>
            <person name="Culley K.M."/>
            <person name="Dhami P."/>
            <person name="Davies J."/>
            <person name="Dunn M."/>
            <person name="Earthrowl M.E."/>
            <person name="Ellington A.E."/>
            <person name="Evans K.A."/>
            <person name="Faulkner L."/>
            <person name="Francis M.D."/>
            <person name="Frankish A."/>
            <person name="Frankland J."/>
            <person name="French L."/>
            <person name="Garner P."/>
            <person name="Garnett J."/>
            <person name="Ghori M.J."/>
            <person name="Gilby L.M."/>
            <person name="Gillson C.J."/>
            <person name="Glithero R.J."/>
            <person name="Grafham D.V."/>
            <person name="Grant M."/>
            <person name="Gribble S."/>
            <person name="Griffiths C."/>
            <person name="Griffiths M.N.D."/>
            <person name="Hall R."/>
            <person name="Halls K.S."/>
            <person name="Hammond S."/>
            <person name="Harley J.L."/>
            <person name="Hart E.A."/>
            <person name="Heath P.D."/>
            <person name="Heathcott R."/>
            <person name="Holmes S.J."/>
            <person name="Howden P.J."/>
            <person name="Howe K.L."/>
            <person name="Howell G.R."/>
            <person name="Huckle E."/>
            <person name="Humphray S.J."/>
            <person name="Humphries M.D."/>
            <person name="Hunt A.R."/>
            <person name="Johnson C.M."/>
            <person name="Joy A.A."/>
            <person name="Kay M."/>
            <person name="Keenan S.J."/>
            <person name="Kimberley A.M."/>
            <person name="King A."/>
            <person name="Laird G.K."/>
            <person name="Langford C."/>
            <person name="Lawlor S."/>
            <person name="Leongamornlert D.A."/>
            <person name="Leversha M."/>
            <person name="Lloyd C.R."/>
            <person name="Lloyd D.M."/>
            <person name="Loveland J.E."/>
            <person name="Lovell J."/>
            <person name="Martin S."/>
            <person name="Mashreghi-Mohammadi M."/>
            <person name="Maslen G.L."/>
            <person name="Matthews L."/>
            <person name="McCann O.T."/>
            <person name="McLaren S.J."/>
            <person name="McLay K."/>
            <person name="McMurray A."/>
            <person name="Moore M.J.F."/>
            <person name="Mullikin J.C."/>
            <person name="Niblett D."/>
            <person name="Nickerson T."/>
            <person name="Novik K.L."/>
            <person name="Oliver K."/>
            <person name="Overton-Larty E.K."/>
            <person name="Parker A."/>
            <person name="Patel R."/>
            <person name="Pearce A.V."/>
            <person name="Peck A.I."/>
            <person name="Phillimore B.J.C.T."/>
            <person name="Phillips S."/>
            <person name="Plumb R.W."/>
            <person name="Porter K.M."/>
            <person name="Ramsey Y."/>
            <person name="Ranby S.A."/>
            <person name="Rice C.M."/>
            <person name="Ross M.T."/>
            <person name="Searle S.M."/>
            <person name="Sehra H.K."/>
            <person name="Sheridan E."/>
            <person name="Skuce C.D."/>
            <person name="Smith S."/>
            <person name="Smith M."/>
            <person name="Spraggon L."/>
            <person name="Squares S.L."/>
            <person name="Steward C.A."/>
            <person name="Sycamore N."/>
            <person name="Tamlyn-Hall G."/>
            <person name="Tester J."/>
            <person name="Theaker A.J."/>
            <person name="Thomas D.W."/>
            <person name="Thorpe A."/>
            <person name="Tracey A."/>
            <person name="Tromans A."/>
            <person name="Tubby B."/>
            <person name="Wall M."/>
            <person name="Wallis J.M."/>
            <person name="West A.P."/>
            <person name="White S.S."/>
            <person name="Whitehead S.L."/>
            <person name="Whittaker H."/>
            <person name="Wild A."/>
            <person name="Willey D.J."/>
            <person name="Wilmer T.E."/>
            <person name="Wood J.M."/>
            <person name="Wray P.W."/>
            <person name="Wyatt J.C."/>
            <person name="Young L."/>
            <person name="Younger R.M."/>
            <person name="Bentley D.R."/>
            <person name="Coulson A."/>
            <person name="Durbin R.M."/>
            <person name="Hubbard T."/>
            <person name="Sulston J.E."/>
            <person name="Dunham I."/>
            <person name="Rogers J."/>
            <person name="Beck S."/>
        </authorList>
    </citation>
    <scope>NUCLEOTIDE SEQUENCE [LARGE SCALE GENOMIC DNA]</scope>
</reference>
<reference key="6">
    <citation type="journal article" date="2004" name="Genome Res.">
        <title>The status, quality, and expansion of the NIH full-length cDNA project: the Mammalian Gene Collection (MGC).</title>
        <authorList>
            <consortium name="The MGC Project Team"/>
        </authorList>
    </citation>
    <scope>NUCLEOTIDE SEQUENCE [LARGE SCALE MRNA] (ISOFORM 1)</scope>
    <source>
        <tissue>Cerebellum</tissue>
    </source>
</reference>
<reference key="7">
    <citation type="journal article" date="2006" name="Cell">
        <title>Global, in vivo, and site-specific phosphorylation dynamics in signaling networks.</title>
        <authorList>
            <person name="Olsen J.V."/>
            <person name="Blagoev B."/>
            <person name="Gnad F."/>
            <person name="Macek B."/>
            <person name="Kumar C."/>
            <person name="Mortensen P."/>
            <person name="Mann M."/>
        </authorList>
    </citation>
    <scope>IDENTIFICATION BY MASS SPECTROMETRY [LARGE SCALE ANALYSIS]</scope>
    <source>
        <tissue>Cervix carcinoma</tissue>
    </source>
</reference>
<reference key="8">
    <citation type="journal article" date="2007" name="Science">
        <title>ATM and ATR substrate analysis reveals extensive protein networks responsive to DNA damage.</title>
        <authorList>
            <person name="Matsuoka S."/>
            <person name="Ballif B.A."/>
            <person name="Smogorzewska A."/>
            <person name="McDonald E.R. III"/>
            <person name="Hurov K.E."/>
            <person name="Luo J."/>
            <person name="Bakalarski C.E."/>
            <person name="Zhao Z."/>
            <person name="Solimini N."/>
            <person name="Lerenthal Y."/>
            <person name="Shiloh Y."/>
            <person name="Gygi S.P."/>
            <person name="Elledge S.J."/>
        </authorList>
    </citation>
    <scope>IDENTIFICATION BY MASS SPECTROMETRY [LARGE SCALE ANALYSIS]</scope>
    <source>
        <tissue>Embryonic kidney</tissue>
    </source>
</reference>
<reference key="9">
    <citation type="journal article" date="2008" name="J. Proteome Res.">
        <title>Combining protein-based IMAC, peptide-based IMAC, and MudPIT for efficient phosphoproteomic analysis.</title>
        <authorList>
            <person name="Cantin G.T."/>
            <person name="Yi W."/>
            <person name="Lu B."/>
            <person name="Park S.K."/>
            <person name="Xu T."/>
            <person name="Lee J.-D."/>
            <person name="Yates J.R. III"/>
        </authorList>
    </citation>
    <scope>IDENTIFICATION BY MASS SPECTROMETRY [LARGE SCALE ANALYSIS]</scope>
    <source>
        <tissue>Cervix carcinoma</tissue>
    </source>
</reference>
<reference key="10">
    <citation type="journal article" date="2008" name="Proc. Natl. Acad. Sci. U.S.A.">
        <title>A quantitative atlas of mitotic phosphorylation.</title>
        <authorList>
            <person name="Dephoure N."/>
            <person name="Zhou C."/>
            <person name="Villen J."/>
            <person name="Beausoleil S.A."/>
            <person name="Bakalarski C.E."/>
            <person name="Elledge S.J."/>
            <person name="Gygi S.P."/>
        </authorList>
    </citation>
    <scope>PHOSPHORYLATION [LARGE SCALE ANALYSIS] AT SER-1148</scope>
    <scope>IDENTIFICATION BY MASS SPECTROMETRY [LARGE SCALE ANALYSIS]</scope>
    <source>
        <tissue>Cervix carcinoma</tissue>
    </source>
</reference>
<reference key="11">
    <citation type="journal article" date="2009" name="Anal. Chem.">
        <title>Lys-N and trypsin cover complementary parts of the phosphoproteome in a refined SCX-based approach.</title>
        <authorList>
            <person name="Gauci S."/>
            <person name="Helbig A.O."/>
            <person name="Slijper M."/>
            <person name="Krijgsveld J."/>
            <person name="Heck A.J."/>
            <person name="Mohammed S."/>
        </authorList>
    </citation>
    <scope>IDENTIFICATION BY MASS SPECTROMETRY [LARGE SCALE ANALYSIS]</scope>
</reference>
<reference key="12">
    <citation type="journal article" date="2009" name="Sci. Signal.">
        <title>Quantitative phosphoproteomic analysis of T cell receptor signaling reveals system-wide modulation of protein-protein interactions.</title>
        <authorList>
            <person name="Mayya V."/>
            <person name="Lundgren D.H."/>
            <person name="Hwang S.-I."/>
            <person name="Rezaul K."/>
            <person name="Wu L."/>
            <person name="Eng J.K."/>
            <person name="Rodionov V."/>
            <person name="Han D.K."/>
        </authorList>
    </citation>
    <scope>PHOSPHORYLATION [LARGE SCALE ANALYSIS] AT SER-1178</scope>
    <scope>IDENTIFICATION BY MASS SPECTROMETRY [LARGE SCALE ANALYSIS]</scope>
    <source>
        <tissue>Leukemic T-cell</tissue>
    </source>
</reference>
<reference key="13">
    <citation type="journal article" date="2010" name="Sci. Signal.">
        <title>Quantitative phosphoproteomics reveals widespread full phosphorylation site occupancy during mitosis.</title>
        <authorList>
            <person name="Olsen J.V."/>
            <person name="Vermeulen M."/>
            <person name="Santamaria A."/>
            <person name="Kumar C."/>
            <person name="Miller M.L."/>
            <person name="Jensen L.J."/>
            <person name="Gnad F."/>
            <person name="Cox J."/>
            <person name="Jensen T.S."/>
            <person name="Nigg E.A."/>
            <person name="Brunak S."/>
            <person name="Mann M."/>
        </authorList>
    </citation>
    <scope>PHOSPHORYLATION [LARGE SCALE ANALYSIS] AT SER-283; SER-299; SER-680; SER-1133; SER-1178 AND SER-1642</scope>
    <scope>IDENTIFICATION BY MASS SPECTROMETRY [LARGE SCALE ANALYSIS]</scope>
    <source>
        <tissue>Cervix carcinoma</tissue>
    </source>
</reference>
<reference key="14">
    <citation type="journal article" date="2011" name="BMC Syst. Biol.">
        <title>Initial characterization of the human central proteome.</title>
        <authorList>
            <person name="Burkard T.R."/>
            <person name="Planyavsky M."/>
            <person name="Kaupe I."/>
            <person name="Breitwieser F.P."/>
            <person name="Buerckstuemmer T."/>
            <person name="Bennett K.L."/>
            <person name="Superti-Furga G."/>
            <person name="Colinge J."/>
        </authorList>
    </citation>
    <scope>IDENTIFICATION BY MASS SPECTROMETRY [LARGE SCALE ANALYSIS]</scope>
</reference>
<reference key="15">
    <citation type="journal article" date="2011" name="Sci. Signal.">
        <title>System-wide temporal characterization of the proteome and phosphoproteome of human embryonic stem cell differentiation.</title>
        <authorList>
            <person name="Rigbolt K.T."/>
            <person name="Prokhorova T.A."/>
            <person name="Akimov V."/>
            <person name="Henningsen J."/>
            <person name="Johansen P.T."/>
            <person name="Kratchmarova I."/>
            <person name="Kassem M."/>
            <person name="Mann M."/>
            <person name="Olsen J.V."/>
            <person name="Blagoev B."/>
        </authorList>
    </citation>
    <scope>PHOSPHORYLATION [LARGE SCALE ANALYSIS] AT SER-1133</scope>
    <scope>IDENTIFICATION BY MASS SPECTROMETRY [LARGE SCALE ANALYSIS]</scope>
</reference>
<reference key="16">
    <citation type="journal article" date="2013" name="J. Proteome Res.">
        <title>Toward a comprehensive characterization of a human cancer cell phosphoproteome.</title>
        <authorList>
            <person name="Zhou H."/>
            <person name="Di Palma S."/>
            <person name="Preisinger C."/>
            <person name="Peng M."/>
            <person name="Polat A.N."/>
            <person name="Heck A.J."/>
            <person name="Mohammed S."/>
        </authorList>
    </citation>
    <scope>PHOSPHORYLATION [LARGE SCALE ANALYSIS] AT SER-97; SER-125; SER-283; SER-1014; SER-1133; SER-1614; SER-1642 AND SER-1925</scope>
    <scope>IDENTIFICATION BY MASS SPECTROMETRY [LARGE SCALE ANALYSIS]</scope>
    <source>
        <tissue>Cervix carcinoma</tissue>
        <tissue>Erythroleukemia</tissue>
    </source>
</reference>
<reference key="17">
    <citation type="journal article" date="2014" name="J. Proteomics">
        <title>An enzyme assisted RP-RPLC approach for in-depth analysis of human liver phosphoproteome.</title>
        <authorList>
            <person name="Bian Y."/>
            <person name="Song C."/>
            <person name="Cheng K."/>
            <person name="Dong M."/>
            <person name="Wang F."/>
            <person name="Huang J."/>
            <person name="Sun D."/>
            <person name="Wang L."/>
            <person name="Ye M."/>
            <person name="Zou H."/>
        </authorList>
    </citation>
    <scope>PHOSPHORYLATION [LARGE SCALE ANALYSIS] AT SER-1133; SER-1148; SER-1178 AND SER-1898</scope>
    <scope>IDENTIFICATION BY MASS SPECTROMETRY [LARGE SCALE ANALYSIS]</scope>
    <source>
        <tissue>Liver</tissue>
    </source>
</reference>
<reference key="18">
    <citation type="journal article" date="2014" name="Mol. Cell. Proteomics">
        <title>Immunoaffinity enrichment and mass spectrometry analysis of protein methylation.</title>
        <authorList>
            <person name="Guo A."/>
            <person name="Gu H."/>
            <person name="Zhou J."/>
            <person name="Mulhern D."/>
            <person name="Wang Y."/>
            <person name="Lee K.A."/>
            <person name="Yang V."/>
            <person name="Aguiar M."/>
            <person name="Kornhauser J."/>
            <person name="Jia X."/>
            <person name="Ren J."/>
            <person name="Beausoleil S.A."/>
            <person name="Silva J.C."/>
            <person name="Vemulapalli V."/>
            <person name="Bedford M.T."/>
            <person name="Comb M.J."/>
        </authorList>
    </citation>
    <scope>METHYLATION [LARGE SCALE ANALYSIS] AT ARG-1867 AND ARG-1877</scope>
    <scope>IDENTIFICATION BY MASS SPECTROMETRY [LARGE SCALE ANALYSIS]</scope>
    <source>
        <tissue>Colon carcinoma</tissue>
    </source>
</reference>
<reference key="19">
    <citation type="journal article" date="2017" name="Nat. Struct. Mol. Biol.">
        <title>Site-specific mapping of the human SUMO proteome reveals co-modification with phosphorylation.</title>
        <authorList>
            <person name="Hendriks I.A."/>
            <person name="Lyon D."/>
            <person name="Young C."/>
            <person name="Jensen L.J."/>
            <person name="Vertegaal A.C."/>
            <person name="Nielsen M.L."/>
        </authorList>
    </citation>
    <scope>SUMOYLATION [LARGE SCALE ANALYSIS] AT LYS-644; LYS-964 AND LYS-1931</scope>
    <scope>IDENTIFICATION BY MASS SPECTROMETRY [LARGE SCALE ANALYSIS]</scope>
</reference>
<reference key="20">
    <citation type="submission" date="2006-10" db="PDB data bank">
        <title>Solution structure of the TFIIS domain II of human PHD finger protein 3.</title>
        <authorList>
            <consortium name="RIKEN structural genomics initiative (RSGI)"/>
        </authorList>
    </citation>
    <scope>STRUCTURE BY NMR OF 923-1029</scope>
</reference>
<accession>Q92576</accession>
<accession>A3KFI8</accession>
<accession>Q14CR5</accession>
<accession>Q5CZI1</accession>
<accession>Q5T1T6</accession>
<accession>Q9NQ16</accession>
<accession>Q9UI45</accession>
<comment type="alternative products">
    <event type="alternative splicing"/>
    <isoform>
        <id>Q92576-1</id>
        <name>1</name>
        <sequence type="displayed"/>
    </isoform>
    <isoform>
        <id>Q92576-2</id>
        <name>2</name>
        <sequence type="described" ref="VSP_026434"/>
    </isoform>
</comment>
<comment type="tissue specificity">
    <text evidence="4">Ubiquitous. Expression is significantly reduced or lost in glioblastomas, glioblastoma cell lines, anaplastic astrocytomas, and astrocytomas.</text>
</comment>
<comment type="sequence caution" evidence="6">
    <conflict type="erroneous initiation">
        <sequence resource="EMBL-CDS" id="BAA13438"/>
    </conflict>
</comment>